<evidence type="ECO:0000250" key="1"/>
<evidence type="ECO:0000255" key="2">
    <source>
        <dbReference type="HAMAP-Rule" id="MF_01109"/>
    </source>
</evidence>
<gene>
    <name evidence="2" type="primary">arcB</name>
    <name type="ordered locus">C8J_0931</name>
</gene>
<dbReference type="EC" id="2.1.3.3" evidence="2"/>
<dbReference type="EMBL" id="CP000814">
    <property type="protein sequence ID" value="ABV52530.1"/>
    <property type="molecule type" value="Genomic_DNA"/>
</dbReference>
<dbReference type="SMR" id="A8FM43"/>
<dbReference type="KEGG" id="cju:C8J_0931"/>
<dbReference type="HOGENOM" id="CLU_043846_3_2_7"/>
<dbReference type="UniPathway" id="UPA00254">
    <property type="reaction ID" value="UER00365"/>
</dbReference>
<dbReference type="GO" id="GO:0005737">
    <property type="term" value="C:cytoplasm"/>
    <property type="evidence" value="ECO:0007669"/>
    <property type="project" value="UniProtKB-SubCell"/>
</dbReference>
<dbReference type="GO" id="GO:0016597">
    <property type="term" value="F:amino acid binding"/>
    <property type="evidence" value="ECO:0007669"/>
    <property type="project" value="InterPro"/>
</dbReference>
<dbReference type="GO" id="GO:0004585">
    <property type="term" value="F:ornithine carbamoyltransferase activity"/>
    <property type="evidence" value="ECO:0007669"/>
    <property type="project" value="UniProtKB-UniRule"/>
</dbReference>
<dbReference type="GO" id="GO:0042450">
    <property type="term" value="P:arginine biosynthetic process via ornithine"/>
    <property type="evidence" value="ECO:0007669"/>
    <property type="project" value="TreeGrafter"/>
</dbReference>
<dbReference type="GO" id="GO:0019547">
    <property type="term" value="P:arginine catabolic process to ornithine"/>
    <property type="evidence" value="ECO:0007669"/>
    <property type="project" value="UniProtKB-UniRule"/>
</dbReference>
<dbReference type="GO" id="GO:0019240">
    <property type="term" value="P:citrulline biosynthetic process"/>
    <property type="evidence" value="ECO:0007669"/>
    <property type="project" value="TreeGrafter"/>
</dbReference>
<dbReference type="FunFam" id="3.40.50.1370:FF:000008">
    <property type="entry name" value="Ornithine carbamoyltransferase"/>
    <property type="match status" value="1"/>
</dbReference>
<dbReference type="Gene3D" id="3.40.50.1370">
    <property type="entry name" value="Aspartate/ornithine carbamoyltransferase"/>
    <property type="match status" value="2"/>
</dbReference>
<dbReference type="HAMAP" id="MF_01109">
    <property type="entry name" value="OTCase"/>
    <property type="match status" value="1"/>
</dbReference>
<dbReference type="InterPro" id="IPR006132">
    <property type="entry name" value="Asp/Orn_carbamoyltranf_P-bd"/>
</dbReference>
<dbReference type="InterPro" id="IPR006130">
    <property type="entry name" value="Asp/Orn_carbamoylTrfase"/>
</dbReference>
<dbReference type="InterPro" id="IPR036901">
    <property type="entry name" value="Asp/Orn_carbamoylTrfase_sf"/>
</dbReference>
<dbReference type="InterPro" id="IPR006131">
    <property type="entry name" value="Asp_carbamoyltransf_Asp/Orn-bd"/>
</dbReference>
<dbReference type="InterPro" id="IPR002292">
    <property type="entry name" value="Orn/put_carbamltrans"/>
</dbReference>
<dbReference type="InterPro" id="IPR024904">
    <property type="entry name" value="OTCase_ArgI"/>
</dbReference>
<dbReference type="NCBIfam" id="TIGR00658">
    <property type="entry name" value="orni_carb_tr"/>
    <property type="match status" value="1"/>
</dbReference>
<dbReference type="NCBIfam" id="NF001986">
    <property type="entry name" value="PRK00779.1"/>
    <property type="match status" value="1"/>
</dbReference>
<dbReference type="PANTHER" id="PTHR45753">
    <property type="entry name" value="ORNITHINE CARBAMOYLTRANSFERASE, MITOCHONDRIAL"/>
    <property type="match status" value="1"/>
</dbReference>
<dbReference type="PANTHER" id="PTHR45753:SF3">
    <property type="entry name" value="ORNITHINE TRANSCARBAMYLASE, MITOCHONDRIAL"/>
    <property type="match status" value="1"/>
</dbReference>
<dbReference type="Pfam" id="PF00185">
    <property type="entry name" value="OTCace"/>
    <property type="match status" value="1"/>
</dbReference>
<dbReference type="Pfam" id="PF02729">
    <property type="entry name" value="OTCace_N"/>
    <property type="match status" value="1"/>
</dbReference>
<dbReference type="PRINTS" id="PR00100">
    <property type="entry name" value="AOTCASE"/>
</dbReference>
<dbReference type="PRINTS" id="PR00102">
    <property type="entry name" value="OTCASE"/>
</dbReference>
<dbReference type="SUPFAM" id="SSF53671">
    <property type="entry name" value="Aspartate/ornithine carbamoyltransferase"/>
    <property type="match status" value="1"/>
</dbReference>
<dbReference type="PROSITE" id="PS00097">
    <property type="entry name" value="CARBAMOYLTRANSFERASE"/>
    <property type="match status" value="1"/>
</dbReference>
<proteinExistence type="inferred from homology"/>
<comment type="function">
    <text evidence="1">Reversibly catalyzes the transfer of the carbamoyl group from carbamoyl phosphate (CP) to the N(epsilon) atom of ornithine (ORN) to produce L-citrulline.</text>
</comment>
<comment type="catalytic activity">
    <reaction evidence="2">
        <text>carbamoyl phosphate + L-ornithine = L-citrulline + phosphate + H(+)</text>
        <dbReference type="Rhea" id="RHEA:19513"/>
        <dbReference type="ChEBI" id="CHEBI:15378"/>
        <dbReference type="ChEBI" id="CHEBI:43474"/>
        <dbReference type="ChEBI" id="CHEBI:46911"/>
        <dbReference type="ChEBI" id="CHEBI:57743"/>
        <dbReference type="ChEBI" id="CHEBI:58228"/>
        <dbReference type="EC" id="2.1.3.3"/>
    </reaction>
</comment>
<comment type="pathway">
    <text evidence="2">Amino-acid degradation; L-arginine degradation via ADI pathway; carbamoyl phosphate from L-arginine: step 2/2.</text>
</comment>
<comment type="subcellular location">
    <subcellularLocation>
        <location evidence="2">Cytoplasm</location>
    </subcellularLocation>
</comment>
<comment type="similarity">
    <text evidence="2">Belongs to the aspartate/ornithine carbamoyltransferase superfamily. OTCase family.</text>
</comment>
<feature type="chain" id="PRO_1000084839" description="Ornithine carbamoyltransferase">
    <location>
        <begin position="1"/>
        <end position="306"/>
    </location>
</feature>
<feature type="binding site" evidence="2">
    <location>
        <begin position="46"/>
        <end position="49"/>
    </location>
    <ligand>
        <name>carbamoyl phosphate</name>
        <dbReference type="ChEBI" id="CHEBI:58228"/>
    </ligand>
</feature>
<feature type="binding site" evidence="2">
    <location>
        <position position="73"/>
    </location>
    <ligand>
        <name>carbamoyl phosphate</name>
        <dbReference type="ChEBI" id="CHEBI:58228"/>
    </ligand>
</feature>
<feature type="binding site" evidence="2">
    <location>
        <position position="97"/>
    </location>
    <ligand>
        <name>carbamoyl phosphate</name>
        <dbReference type="ChEBI" id="CHEBI:58228"/>
    </ligand>
</feature>
<feature type="binding site" evidence="2">
    <location>
        <begin position="124"/>
        <end position="127"/>
    </location>
    <ligand>
        <name>carbamoyl phosphate</name>
        <dbReference type="ChEBI" id="CHEBI:58228"/>
    </ligand>
</feature>
<feature type="binding site" evidence="2">
    <location>
        <position position="156"/>
    </location>
    <ligand>
        <name>L-ornithine</name>
        <dbReference type="ChEBI" id="CHEBI:46911"/>
    </ligand>
</feature>
<feature type="binding site" evidence="2">
    <location>
        <position position="220"/>
    </location>
    <ligand>
        <name>L-ornithine</name>
        <dbReference type="ChEBI" id="CHEBI:46911"/>
    </ligand>
</feature>
<feature type="binding site" evidence="2">
    <location>
        <begin position="224"/>
        <end position="225"/>
    </location>
    <ligand>
        <name>L-ornithine</name>
        <dbReference type="ChEBI" id="CHEBI:46911"/>
    </ligand>
</feature>
<feature type="binding site" evidence="2">
    <location>
        <begin position="260"/>
        <end position="261"/>
    </location>
    <ligand>
        <name>carbamoyl phosphate</name>
        <dbReference type="ChEBI" id="CHEBI:58228"/>
    </ligand>
</feature>
<feature type="binding site" evidence="2">
    <location>
        <position position="288"/>
    </location>
    <ligand>
        <name>carbamoyl phosphate</name>
        <dbReference type="ChEBI" id="CHEBI:58228"/>
    </ligand>
</feature>
<sequence length="306" mass="35024">MKHFLTLRDFSKEEILSLVNHASELKKEPKKLLQDKTLAMIFEKNSTRTRMAFELAITELGGKALFLSSNDLQLSRGEPVKDTARVIGTMVDFVMMRVNKHETLLEFARYSKAPVINALSEFYHPTQVLGDLLTIKEWNKMQNGIAKVAFIGDSNNMCNSWLIVAAILGFEFSIAIPKNYKISPEIWEFAMKQALISGAKISLSHDKFEALKDKDVVITDTWVSMGEENEKERKIKEFEGFMIDEKAMSVANKDAILLHCLPAYRGYEVSEEIFEKHADVIFEEARNRLYVVKALLCFLDNQRGRE</sequence>
<keyword id="KW-0056">Arginine metabolism</keyword>
<keyword id="KW-0963">Cytoplasm</keyword>
<keyword id="KW-0808">Transferase</keyword>
<name>OTC_CAMJ8</name>
<protein>
    <recommendedName>
        <fullName evidence="2">Ornithine carbamoyltransferase</fullName>
        <shortName evidence="2">OTCase</shortName>
        <ecNumber evidence="2">2.1.3.3</ecNumber>
    </recommendedName>
</protein>
<reference key="1">
    <citation type="journal article" date="2007" name="J. Bacteriol.">
        <title>The complete genome sequence of Campylobacter jejuni strain 81116 (NCTC11828).</title>
        <authorList>
            <person name="Pearson B.M."/>
            <person name="Gaskin D.J.H."/>
            <person name="Segers R.P.A.M."/>
            <person name="Wells J.M."/>
            <person name="Nuijten P.J.M."/>
            <person name="van Vliet A.H.M."/>
        </authorList>
    </citation>
    <scope>NUCLEOTIDE SEQUENCE [LARGE SCALE GENOMIC DNA]</scope>
    <source>
        <strain>81116 / NCTC 11828</strain>
    </source>
</reference>
<accession>A8FM43</accession>
<organism>
    <name type="scientific">Campylobacter jejuni subsp. jejuni serotype O:6 (strain 81116 / NCTC 11828)</name>
    <dbReference type="NCBI Taxonomy" id="407148"/>
    <lineage>
        <taxon>Bacteria</taxon>
        <taxon>Pseudomonadati</taxon>
        <taxon>Campylobacterota</taxon>
        <taxon>Epsilonproteobacteria</taxon>
        <taxon>Campylobacterales</taxon>
        <taxon>Campylobacteraceae</taxon>
        <taxon>Campylobacter</taxon>
    </lineage>
</organism>